<keyword id="KW-0539">Nucleus</keyword>
<keyword id="KW-0687">Ribonucleoprotein</keyword>
<keyword id="KW-0690">Ribosome biogenesis</keyword>
<keyword id="KW-0694">RNA-binding</keyword>
<keyword id="KW-0698">rRNA processing</keyword>
<reference evidence="4" key="1">
    <citation type="journal article" date="2011" name="PLoS Genet.">
        <title>Whole-genome comparison reveals novel genetic elements that characterize the genome of industrial strains of Saccharomyces cerevisiae.</title>
        <authorList>
            <person name="Borneman A.R."/>
            <person name="Desany B.A."/>
            <person name="Riches D."/>
            <person name="Affourtit J.P."/>
            <person name="Forgan A.H."/>
            <person name="Pretorius I.S."/>
            <person name="Egholm M."/>
            <person name="Chambers P.J."/>
        </authorList>
    </citation>
    <scope>NUCLEOTIDE SEQUENCE [LARGE SCALE GENOMIC DNA]</scope>
    <source>
        <strain evidence="4">Zymaflore VL3</strain>
    </source>
</reference>
<protein>
    <recommendedName>
        <fullName evidence="1">KRR1 small subunit processome component</fullName>
    </recommendedName>
    <alternativeName>
        <fullName evidence="1">KRR-R motif-containing protein 1</fullName>
    </alternativeName>
    <alternativeName>
        <fullName evidence="1">Ribosomal RNA assembly protein KRR1</fullName>
    </alternativeName>
</protein>
<feature type="chain" id="PRO_0000415662" description="KRR1 small subunit processome component">
    <location>
        <begin position="1"/>
        <end position="316"/>
    </location>
</feature>
<feature type="domain" description="KH" evidence="2">
    <location>
        <begin position="122"/>
        <end position="192"/>
    </location>
</feature>
<feature type="region of interest" description="Disordered" evidence="3">
    <location>
        <begin position="279"/>
        <end position="316"/>
    </location>
</feature>
<feature type="compositionally biased region" description="Basic and acidic residues" evidence="3">
    <location>
        <begin position="279"/>
        <end position="304"/>
    </location>
</feature>
<accession>E7QBZ1</accession>
<gene>
    <name evidence="1" type="primary">KRR1</name>
    <name type="ORF">VL3_0432</name>
</gene>
<organism>
    <name type="scientific">Saccharomyces cerevisiae (strain Zymaflore VL3)</name>
    <name type="common">Baker's yeast</name>
    <dbReference type="NCBI Taxonomy" id="764100"/>
    <lineage>
        <taxon>Eukaryota</taxon>
        <taxon>Fungi</taxon>
        <taxon>Dikarya</taxon>
        <taxon>Ascomycota</taxon>
        <taxon>Saccharomycotina</taxon>
        <taxon>Saccharomycetes</taxon>
        <taxon>Saccharomycetales</taxon>
        <taxon>Saccharomycetaceae</taxon>
        <taxon>Saccharomyces</taxon>
    </lineage>
</organism>
<evidence type="ECO:0000250" key="1">
    <source>
        <dbReference type="UniProtKB" id="P25586"/>
    </source>
</evidence>
<evidence type="ECO:0000255" key="2"/>
<evidence type="ECO:0000256" key="3">
    <source>
        <dbReference type="SAM" id="MobiDB-lite"/>
    </source>
</evidence>
<evidence type="ECO:0000312" key="4">
    <source>
        <dbReference type="EMBL" id="EGA87829.1"/>
    </source>
</evidence>
<dbReference type="EMBL" id="AEJS01000007">
    <property type="protein sequence ID" value="EGA87829.1"/>
    <property type="molecule type" value="Genomic_DNA"/>
</dbReference>
<dbReference type="SMR" id="E7QBZ1"/>
<dbReference type="HOGENOM" id="CLU_040185_0_2_1"/>
<dbReference type="OrthoDB" id="441223at2759"/>
<dbReference type="GO" id="GO:0005730">
    <property type="term" value="C:nucleolus"/>
    <property type="evidence" value="ECO:0007669"/>
    <property type="project" value="UniProtKB-SubCell"/>
</dbReference>
<dbReference type="GO" id="GO:0032040">
    <property type="term" value="C:small-subunit processome"/>
    <property type="evidence" value="ECO:0007669"/>
    <property type="project" value="TreeGrafter"/>
</dbReference>
<dbReference type="GO" id="GO:0003723">
    <property type="term" value="F:RNA binding"/>
    <property type="evidence" value="ECO:0007669"/>
    <property type="project" value="UniProtKB-KW"/>
</dbReference>
<dbReference type="GO" id="GO:0006364">
    <property type="term" value="P:rRNA processing"/>
    <property type="evidence" value="ECO:0007669"/>
    <property type="project" value="UniProtKB-KW"/>
</dbReference>
<dbReference type="CDD" id="cd22393">
    <property type="entry name" value="KH-I_KRR1_rpt1"/>
    <property type="match status" value="1"/>
</dbReference>
<dbReference type="CDD" id="cd22394">
    <property type="entry name" value="KH-I_KRR1_rpt2"/>
    <property type="match status" value="1"/>
</dbReference>
<dbReference type="FunFam" id="3.30.1370.10:FF:000011">
    <property type="entry name" value="KRR1 small subunit processome component"/>
    <property type="match status" value="1"/>
</dbReference>
<dbReference type="FunFam" id="3.30.1370.10:FF:000014">
    <property type="entry name" value="KRR1 small subunit processome component"/>
    <property type="match status" value="1"/>
</dbReference>
<dbReference type="Gene3D" id="3.30.1370.10">
    <property type="entry name" value="K Homology domain, type 1"/>
    <property type="match status" value="2"/>
</dbReference>
<dbReference type="InterPro" id="IPR004087">
    <property type="entry name" value="KH_dom"/>
</dbReference>
<dbReference type="InterPro" id="IPR036612">
    <property type="entry name" value="KH_dom_type_1_sf"/>
</dbReference>
<dbReference type="InterPro" id="IPR041174">
    <property type="entry name" value="KRR1-like_KH1"/>
</dbReference>
<dbReference type="InterPro" id="IPR048550">
    <property type="entry name" value="KRR1-like_KH1_euk"/>
</dbReference>
<dbReference type="InterPro" id="IPR048548">
    <property type="entry name" value="KRR1-like_KH2"/>
</dbReference>
<dbReference type="InterPro" id="IPR048549">
    <property type="entry name" value="KRR1-like_KH2_euk"/>
</dbReference>
<dbReference type="InterPro" id="IPR024166">
    <property type="entry name" value="rRNA_assembly_KRR1"/>
</dbReference>
<dbReference type="PANTHER" id="PTHR12581">
    <property type="entry name" value="HIV-1 REV BINDING PROTEIN 2, 3"/>
    <property type="match status" value="1"/>
</dbReference>
<dbReference type="PANTHER" id="PTHR12581:SF0">
    <property type="entry name" value="KRR1 SMALL SUBUNIT PROCESSOME COMPONENT HOMOLOG"/>
    <property type="match status" value="1"/>
</dbReference>
<dbReference type="Pfam" id="PF17903">
    <property type="entry name" value="KH_KRR1_1st"/>
    <property type="match status" value="1"/>
</dbReference>
<dbReference type="Pfam" id="PF21800">
    <property type="entry name" value="KH_KRR1_2nd"/>
    <property type="match status" value="1"/>
</dbReference>
<dbReference type="PIRSF" id="PIRSF006515">
    <property type="entry name" value="KRR1"/>
    <property type="match status" value="1"/>
</dbReference>
<dbReference type="SMART" id="SM00322">
    <property type="entry name" value="KH"/>
    <property type="match status" value="1"/>
</dbReference>
<dbReference type="SUPFAM" id="SSF54791">
    <property type="entry name" value="Eukaryotic type KH-domain (KH-domain type I)"/>
    <property type="match status" value="1"/>
</dbReference>
<comment type="function">
    <text evidence="1">Required for 40S ribosome biogenesis. Involved in nucleolar processing of pre-18S ribosomal RNA and ribosome assembly. Essential for vegetative growth (By similarity).</text>
</comment>
<comment type="subunit">
    <text evidence="1">Component of the ribosomal small subunit (SSU) processome composed of at least 40 protein subunits and snoRNA U3. Interacts with snoRNA U3. Interacts with MPP10, KRI1 and with ribosomal proteins RPS1A, RPS4A, RPS4B, RPS8A, RPS8B, RPS11A, RPS11B, RPS13, RPS24, RPS25, RPL4A, RPL7B, RPL8, RPL23, RPL25 and RPL28 (By similarity).</text>
</comment>
<comment type="subcellular location">
    <subcellularLocation>
        <location evidence="1">Nucleus</location>
        <location evidence="1">Nucleolus</location>
    </subcellularLocation>
</comment>
<comment type="similarity">
    <text evidence="2">Belongs to the KRR1 family.</text>
</comment>
<name>KRR1_YEASZ</name>
<sequence>MVSTHNRDKPWDTDDIDKWKIEEFKEEDNASGQPFAEESSFMTLFPKYRESYLKTIWNDVTRALDKHNIACVLDLVEGSMTVKTTRKTYDPAIILKARDLIKLLARSVPFPQAVKILQDDMACDVIKIGNFVTNKERFVKRRQRLVGPNGNTLKALELLTKCYILVQGNTVSAMGPFKGLKEVRRVVEDCMKNIHPIYHIKELMIKRELAKRPELANEDWSRFLPMFKKRNVARKKPKKIRNVEKKVYTPFPPAQLPRKVDLEIESGEYFLSKREKQMKKLNEQKEKQMEREIERQEERAKDFIAPEEEAYKPNQN</sequence>
<proteinExistence type="inferred from homology"/>